<name>TATA_SULDN</name>
<proteinExistence type="inferred from homology"/>
<sequence>MGMPSGQELLIILAIVVLLFGAKKIPELAKGIGKGIKNFKAEMKNEDDDTEVKSASTEAPKKVESAEEVASKESSKTPTQA</sequence>
<accession>Q30PL2</accession>
<keyword id="KW-0997">Cell inner membrane</keyword>
<keyword id="KW-1003">Cell membrane</keyword>
<keyword id="KW-0472">Membrane</keyword>
<keyword id="KW-0653">Protein transport</keyword>
<keyword id="KW-1185">Reference proteome</keyword>
<keyword id="KW-0811">Translocation</keyword>
<keyword id="KW-0812">Transmembrane</keyword>
<keyword id="KW-1133">Transmembrane helix</keyword>
<keyword id="KW-0813">Transport</keyword>
<dbReference type="EMBL" id="CP000153">
    <property type="protein sequence ID" value="ABB45069.1"/>
    <property type="molecule type" value="Genomic_DNA"/>
</dbReference>
<dbReference type="RefSeq" id="WP_011373409.1">
    <property type="nucleotide sequence ID" value="NC_007575.1"/>
</dbReference>
<dbReference type="SMR" id="Q30PL2"/>
<dbReference type="STRING" id="326298.Suden_1795"/>
<dbReference type="KEGG" id="tdn:Suden_1795"/>
<dbReference type="eggNOG" id="COG1826">
    <property type="taxonomic scope" value="Bacteria"/>
</dbReference>
<dbReference type="HOGENOM" id="CLU_086034_5_4_7"/>
<dbReference type="OrthoDB" id="9813726at2"/>
<dbReference type="Proteomes" id="UP000002714">
    <property type="component" value="Chromosome"/>
</dbReference>
<dbReference type="GO" id="GO:0033281">
    <property type="term" value="C:TAT protein transport complex"/>
    <property type="evidence" value="ECO:0007669"/>
    <property type="project" value="UniProtKB-UniRule"/>
</dbReference>
<dbReference type="GO" id="GO:0008320">
    <property type="term" value="F:protein transmembrane transporter activity"/>
    <property type="evidence" value="ECO:0007669"/>
    <property type="project" value="UniProtKB-UniRule"/>
</dbReference>
<dbReference type="GO" id="GO:0043953">
    <property type="term" value="P:protein transport by the Tat complex"/>
    <property type="evidence" value="ECO:0007669"/>
    <property type="project" value="UniProtKB-UniRule"/>
</dbReference>
<dbReference type="Gene3D" id="1.20.5.3310">
    <property type="match status" value="1"/>
</dbReference>
<dbReference type="HAMAP" id="MF_00236">
    <property type="entry name" value="TatA_E"/>
    <property type="match status" value="1"/>
</dbReference>
<dbReference type="InterPro" id="IPR003369">
    <property type="entry name" value="TatA/B/E"/>
</dbReference>
<dbReference type="InterPro" id="IPR006312">
    <property type="entry name" value="TatA/E"/>
</dbReference>
<dbReference type="NCBIfam" id="TIGR01411">
    <property type="entry name" value="tatAE"/>
    <property type="match status" value="1"/>
</dbReference>
<dbReference type="PANTHER" id="PTHR42982">
    <property type="entry name" value="SEC-INDEPENDENT PROTEIN TRANSLOCASE PROTEIN TATA"/>
    <property type="match status" value="1"/>
</dbReference>
<dbReference type="PANTHER" id="PTHR42982:SF1">
    <property type="entry name" value="SEC-INDEPENDENT PROTEIN TRANSLOCASE PROTEIN TATA"/>
    <property type="match status" value="1"/>
</dbReference>
<dbReference type="Pfam" id="PF02416">
    <property type="entry name" value="TatA_B_E"/>
    <property type="match status" value="1"/>
</dbReference>
<evidence type="ECO:0000255" key="1">
    <source>
        <dbReference type="HAMAP-Rule" id="MF_00236"/>
    </source>
</evidence>
<evidence type="ECO:0000256" key="2">
    <source>
        <dbReference type="SAM" id="MobiDB-lite"/>
    </source>
</evidence>
<reference key="1">
    <citation type="journal article" date="2008" name="Appl. Environ. Microbiol.">
        <title>Genome of the epsilonproteobacterial chemolithoautotroph Sulfurimonas denitrificans.</title>
        <authorList>
            <person name="Sievert S.M."/>
            <person name="Scott K.M."/>
            <person name="Klotz M.G."/>
            <person name="Chain P.S.G."/>
            <person name="Hauser L.J."/>
            <person name="Hemp J."/>
            <person name="Huegler M."/>
            <person name="Land M."/>
            <person name="Lapidus A."/>
            <person name="Larimer F.W."/>
            <person name="Lucas S."/>
            <person name="Malfatti S.A."/>
            <person name="Meyer F."/>
            <person name="Paulsen I.T."/>
            <person name="Ren Q."/>
            <person name="Simon J."/>
            <person name="Bailey K."/>
            <person name="Diaz E."/>
            <person name="Fitzpatrick K.A."/>
            <person name="Glover B."/>
            <person name="Gwatney N."/>
            <person name="Korajkic A."/>
            <person name="Long A."/>
            <person name="Mobberley J.M."/>
            <person name="Pantry S.N."/>
            <person name="Pazder G."/>
            <person name="Peterson S."/>
            <person name="Quintanilla J.D."/>
            <person name="Sprinkle R."/>
            <person name="Stephens J."/>
            <person name="Thomas P."/>
            <person name="Vaughn R."/>
            <person name="Weber M.J."/>
            <person name="Wooten L.L."/>
        </authorList>
    </citation>
    <scope>NUCLEOTIDE SEQUENCE [LARGE SCALE GENOMIC DNA]</scope>
    <source>
        <strain>ATCC 33889 / DSM 1251</strain>
    </source>
</reference>
<feature type="chain" id="PRO_1000071817" description="Sec-independent protein translocase protein TatA">
    <location>
        <begin position="1"/>
        <end position="81"/>
    </location>
</feature>
<feature type="transmembrane region" description="Helical" evidence="1">
    <location>
        <begin position="1"/>
        <end position="21"/>
    </location>
</feature>
<feature type="region of interest" description="Disordered" evidence="2">
    <location>
        <begin position="45"/>
        <end position="81"/>
    </location>
</feature>
<feature type="compositionally biased region" description="Basic and acidic residues" evidence="2">
    <location>
        <begin position="59"/>
        <end position="75"/>
    </location>
</feature>
<organism>
    <name type="scientific">Sulfurimonas denitrificans (strain ATCC 33889 / DSM 1251)</name>
    <name type="common">Thiomicrospira denitrificans (strain ATCC 33889 / DSM 1251)</name>
    <dbReference type="NCBI Taxonomy" id="326298"/>
    <lineage>
        <taxon>Bacteria</taxon>
        <taxon>Pseudomonadati</taxon>
        <taxon>Campylobacterota</taxon>
        <taxon>Epsilonproteobacteria</taxon>
        <taxon>Campylobacterales</taxon>
        <taxon>Sulfurimonadaceae</taxon>
        <taxon>Sulfurimonas</taxon>
    </lineage>
</organism>
<gene>
    <name evidence="1" type="primary">tatA</name>
    <name type="ordered locus">Suden_1795</name>
</gene>
<comment type="function">
    <text evidence="1">Part of the twin-arginine translocation (Tat) system that transports large folded proteins containing a characteristic twin-arginine motif in their signal peptide across membranes. TatA could form the protein-conducting channel of the Tat system.</text>
</comment>
<comment type="subunit">
    <text evidence="1">The Tat system comprises two distinct complexes: a TatABC complex, containing multiple copies of TatA, TatB and TatC subunits, and a separate TatA complex, containing only TatA subunits. Substrates initially bind to the TatABC complex, which probably triggers association of the separate TatA complex to form the active translocon.</text>
</comment>
<comment type="subcellular location">
    <subcellularLocation>
        <location evidence="1">Cell inner membrane</location>
        <topology evidence="1">Single-pass membrane protein</topology>
    </subcellularLocation>
</comment>
<comment type="similarity">
    <text evidence="1">Belongs to the TatA/E family.</text>
</comment>
<protein>
    <recommendedName>
        <fullName evidence="1">Sec-independent protein translocase protein TatA</fullName>
    </recommendedName>
</protein>